<sequence length="289" mass="33068">MQIPRSVGTHDGSFHADEVTACALLIMFDLVDKDKIIRTRDSEKLAQCEYVCDVGGRYSIADKRFDHHQVSYTGSWSSAGMVLDYLHHLGSLPHEEYEYLNSTLVHGVDEQDNGRFFSKEGFCSFSDIIKIYNPLEEGGNTDKEFFFALHFAIDLLTRLREKFRYDRICRDVVKQVMEKEDVCLRFDRPLAWQENFFSLGGENHPAAFVSFPCSDQWILRGIPPTLDRRMEVRIPFPEDWAGLLGDQLVKATGIPGAIFCHKGLFLSVWDSRESCEEALNLVLKQQGVV</sequence>
<comment type="similarity">
    <text evidence="1">Belongs to the MYG1 family.</text>
</comment>
<comment type="sequence caution" evidence="1">
    <conflict type="erroneous initiation">
        <sequence resource="EMBL-CDS" id="AAF39487"/>
    </conflict>
</comment>
<protein>
    <recommendedName>
        <fullName>MYG1 protein TC_0665</fullName>
    </recommendedName>
</protein>
<proteinExistence type="inferred from homology"/>
<name>Y665_CHLMU</name>
<reference key="1">
    <citation type="journal article" date="2000" name="Nucleic Acids Res.">
        <title>Genome sequences of Chlamydia trachomatis MoPn and Chlamydia pneumoniae AR39.</title>
        <authorList>
            <person name="Read T.D."/>
            <person name="Brunham R.C."/>
            <person name="Shen C."/>
            <person name="Gill S.R."/>
            <person name="Heidelberg J.F."/>
            <person name="White O."/>
            <person name="Hickey E.K."/>
            <person name="Peterson J.D."/>
            <person name="Utterback T.R."/>
            <person name="Berry K.J."/>
            <person name="Bass S."/>
            <person name="Linher K.D."/>
            <person name="Weidman J.F."/>
            <person name="Khouri H.M."/>
            <person name="Craven B."/>
            <person name="Bowman C."/>
            <person name="Dodson R.J."/>
            <person name="Gwinn M.L."/>
            <person name="Nelson W.C."/>
            <person name="DeBoy R.T."/>
            <person name="Kolonay J.F."/>
            <person name="McClarty G."/>
            <person name="Salzberg S.L."/>
            <person name="Eisen J.A."/>
            <person name="Fraser C.M."/>
        </authorList>
    </citation>
    <scope>NUCLEOTIDE SEQUENCE [LARGE SCALE GENOMIC DNA]</scope>
    <source>
        <strain>MoPn / Nigg</strain>
    </source>
</reference>
<organism>
    <name type="scientific">Chlamydia muridarum (strain MoPn / Nigg)</name>
    <dbReference type="NCBI Taxonomy" id="243161"/>
    <lineage>
        <taxon>Bacteria</taxon>
        <taxon>Pseudomonadati</taxon>
        <taxon>Chlamydiota</taxon>
        <taxon>Chlamydiia</taxon>
        <taxon>Chlamydiales</taxon>
        <taxon>Chlamydiaceae</taxon>
        <taxon>Chlamydia/Chlamydophila group</taxon>
        <taxon>Chlamydia</taxon>
    </lineage>
</organism>
<dbReference type="EMBL" id="AE002160">
    <property type="protein sequence ID" value="AAF39487.1"/>
    <property type="status" value="ALT_INIT"/>
    <property type="molecule type" value="Genomic_DNA"/>
</dbReference>
<dbReference type="PIR" id="D81677">
    <property type="entry name" value="D81677"/>
</dbReference>
<dbReference type="RefSeq" id="WP_010231156.1">
    <property type="nucleotide sequence ID" value="NZ_CP063055.1"/>
</dbReference>
<dbReference type="GeneID" id="1246026"/>
<dbReference type="KEGG" id="cmu:TC_0665"/>
<dbReference type="eggNOG" id="COG4286">
    <property type="taxonomic scope" value="Bacteria"/>
</dbReference>
<dbReference type="HOGENOM" id="CLU_051576_1_1_0"/>
<dbReference type="OrthoDB" id="183622at2"/>
<dbReference type="Proteomes" id="UP000000800">
    <property type="component" value="Chromosome"/>
</dbReference>
<dbReference type="InterPro" id="IPR003226">
    <property type="entry name" value="MYG1_exonuclease"/>
</dbReference>
<dbReference type="PANTHER" id="PTHR11215">
    <property type="entry name" value="METAL DEPENDENT HYDROLASE - RELATED"/>
    <property type="match status" value="1"/>
</dbReference>
<dbReference type="PANTHER" id="PTHR11215:SF1">
    <property type="entry name" value="MYG1 EXONUCLEASE"/>
    <property type="match status" value="1"/>
</dbReference>
<dbReference type="Pfam" id="PF03690">
    <property type="entry name" value="MYG1_exonuc"/>
    <property type="match status" value="1"/>
</dbReference>
<evidence type="ECO:0000305" key="1"/>
<accession>Q9PK08</accession>
<feature type="chain" id="PRO_0000213488" description="MYG1 protein TC_0665">
    <location>
        <begin position="1"/>
        <end position="289"/>
    </location>
</feature>
<gene>
    <name type="ordered locus">TC_0665</name>
</gene>